<feature type="chain" id="PRO_0000445788" description="Beta-1,2-xylosyltransferase RCN11">
    <location>
        <begin position="1"/>
        <end position="533"/>
    </location>
</feature>
<feature type="topological domain" description="Cytoplasmic" evidence="6">
    <location>
        <begin position="1"/>
        <end position="23"/>
    </location>
</feature>
<feature type="transmembrane region" description="Helical; Signal-anchor for type II membrane protein" evidence="1">
    <location>
        <begin position="24"/>
        <end position="44"/>
    </location>
</feature>
<feature type="topological domain" description="Lumenal" evidence="6">
    <location>
        <begin position="45"/>
        <end position="533"/>
    </location>
</feature>
<feature type="region of interest" description="Disordered" evidence="3">
    <location>
        <begin position="51"/>
        <end position="78"/>
    </location>
</feature>
<feature type="compositionally biased region" description="Basic and acidic residues" evidence="3">
    <location>
        <begin position="56"/>
        <end position="65"/>
    </location>
</feature>
<feature type="glycosylation site" description="N-linked (GlcNAc...) asparagine" evidence="2">
    <location>
        <position position="307"/>
    </location>
</feature>
<feature type="glycosylation site" description="N-linked (GlcNAc...) asparagine" evidence="2">
    <location>
        <position position="313"/>
    </location>
</feature>
<feature type="sequence conflict" description="In Ref. 4; CAF21940." evidence="6" ref="4">
    <original>E</original>
    <variation>D</variation>
    <location>
        <position position="145"/>
    </location>
</feature>
<evidence type="ECO:0000255" key="1"/>
<evidence type="ECO:0000255" key="2">
    <source>
        <dbReference type="PROSITE-ProRule" id="PRU00498"/>
    </source>
</evidence>
<evidence type="ECO:0000256" key="3">
    <source>
        <dbReference type="SAM" id="MobiDB-lite"/>
    </source>
</evidence>
<evidence type="ECO:0000269" key="4">
    <source>
    </source>
</evidence>
<evidence type="ECO:0000303" key="5">
    <source>
    </source>
</evidence>
<evidence type="ECO:0000305" key="6"/>
<evidence type="ECO:0000305" key="7">
    <source>
    </source>
</evidence>
<evidence type="ECO:0000312" key="8">
    <source>
        <dbReference type="EMBL" id="BAD09279.1"/>
    </source>
</evidence>
<evidence type="ECO:0000312" key="9">
    <source>
        <dbReference type="EMBL" id="BAF24091.1"/>
    </source>
</evidence>
<sequence length="533" mass="58896">MMPVRTYHHHHHHNNSNNHRLRRIIPRVLLAVFAIYAVSFAAYLLRHQSPHPHPHPAADPERDAVDAAGGGGGGGAVDRVRVEAPSSQKPWPRLPSFLPWTSASVRPPPKHSCEGYFGNGFSRLVDVLPARGGGGGGWFRCHHSETLRSSICEGGRVRLDPGLIAMSRGGEPLDQVMGRAEEEELPKYEPGALQVEAAAKRTGPLVEAGFLDAYVPTGGIGMHTMRSLLDSGRVVPPGELHCSQWVEEPTLLVTRFEYANLFHTITDWYSAYVSSRVTDLPNRPNVVFVDGHCKAQLEQTWEALFSNVTYVKNFSGPVCFRHAILSPLGYETALFKGLSESFSCEGASAESLREKPDHQKTARLSEFGEMILASFDLLRDDILSSKTSNGLNVLFVRREDYLAHPRHSGKVESRLSNEKEVYDAIEGWAKGQKCKINVINGLFAHMNMKEQLRAIQEASVVIGAHGAGLTHLVSATPDTKVLEIISSMYRRPHFALISHWKSLEYHAINLPGSYARVTDVINELSNILKGFGC</sequence>
<accession>Q6ZFH6</accession>
<accession>Q703H0</accession>
<accession>Q703H1</accession>
<organism>
    <name type="scientific">Oryza sativa subsp. japonica</name>
    <name type="common">Rice</name>
    <dbReference type="NCBI Taxonomy" id="39947"/>
    <lineage>
        <taxon>Eukaryota</taxon>
        <taxon>Viridiplantae</taxon>
        <taxon>Streptophyta</taxon>
        <taxon>Embryophyta</taxon>
        <taxon>Tracheophyta</taxon>
        <taxon>Spermatophyta</taxon>
        <taxon>Magnoliopsida</taxon>
        <taxon>Liliopsida</taxon>
        <taxon>Poales</taxon>
        <taxon>Poaceae</taxon>
        <taxon>BOP clade</taxon>
        <taxon>Oryzoideae</taxon>
        <taxon>Oryzeae</taxon>
        <taxon>Oryzinae</taxon>
        <taxon>Oryza</taxon>
        <taxon>Oryza sativa</taxon>
    </lineage>
</organism>
<dbReference type="EC" id="2.4.2.-" evidence="4"/>
<dbReference type="EMBL" id="AP004190">
    <property type="protein sequence ID" value="BAD09279.1"/>
    <property type="molecule type" value="Genomic_DNA"/>
</dbReference>
<dbReference type="EMBL" id="AP008214">
    <property type="protein sequence ID" value="BAF24091.1"/>
    <property type="molecule type" value="Genomic_DNA"/>
</dbReference>
<dbReference type="EMBL" id="AP014964">
    <property type="protein sequence ID" value="BAT06140.1"/>
    <property type="molecule type" value="Genomic_DNA"/>
</dbReference>
<dbReference type="EMBL" id="AJ621917">
    <property type="protein sequence ID" value="CAF21940.1"/>
    <property type="molecule type" value="Genomic_DNA"/>
</dbReference>
<dbReference type="EMBL" id="AJ621918">
    <property type="protein sequence ID" value="CAF21941.1"/>
    <property type="molecule type" value="mRNA"/>
</dbReference>
<dbReference type="FunCoup" id="Q6ZFH6">
    <property type="interactions" value="1735"/>
</dbReference>
<dbReference type="STRING" id="39947.Q6ZFH6"/>
<dbReference type="CAZy" id="GT61">
    <property type="family name" value="Glycosyltransferase Family 61"/>
</dbReference>
<dbReference type="GlyCosmos" id="Q6ZFH6">
    <property type="glycosylation" value="2 sites, No reported glycans"/>
</dbReference>
<dbReference type="PaxDb" id="39947-Q6ZFH6"/>
<dbReference type="EnsemblPlants" id="Os08t0503800-01">
    <property type="protein sequence ID" value="Os08t0503800-01"/>
    <property type="gene ID" value="Os08g0503800"/>
</dbReference>
<dbReference type="Gramene" id="Os08t0503800-01">
    <property type="protein sequence ID" value="Os08t0503800-01"/>
    <property type="gene ID" value="Os08g0503800"/>
</dbReference>
<dbReference type="KEGG" id="dosa:Os08g0503800"/>
<dbReference type="eggNOG" id="KOG4698">
    <property type="taxonomic scope" value="Eukaryota"/>
</dbReference>
<dbReference type="HOGENOM" id="CLU_026674_0_0_1"/>
<dbReference type="InParanoid" id="Q6ZFH6"/>
<dbReference type="OMA" id="FIRREDY"/>
<dbReference type="BRENDA" id="2.4.2.38">
    <property type="organism ID" value="4460"/>
</dbReference>
<dbReference type="Proteomes" id="UP000000763">
    <property type="component" value="Chromosome 8"/>
</dbReference>
<dbReference type="Proteomes" id="UP000059680">
    <property type="component" value="Chromosome 8"/>
</dbReference>
<dbReference type="GO" id="GO:0005797">
    <property type="term" value="C:Golgi medial cisterna"/>
    <property type="evidence" value="ECO:0007669"/>
    <property type="project" value="EnsemblPlants"/>
</dbReference>
<dbReference type="GO" id="GO:0000139">
    <property type="term" value="C:Golgi membrane"/>
    <property type="evidence" value="ECO:0000314"/>
    <property type="project" value="UniProtKB"/>
</dbReference>
<dbReference type="GO" id="GO:0050513">
    <property type="term" value="F:glycoprotein 2-beta-D-xylosyltransferase activity"/>
    <property type="evidence" value="ECO:0007669"/>
    <property type="project" value="EnsemblPlants"/>
</dbReference>
<dbReference type="GO" id="GO:0035252">
    <property type="term" value="F:UDP-xylosyltransferase activity"/>
    <property type="evidence" value="ECO:0000314"/>
    <property type="project" value="UniProtKB"/>
</dbReference>
<dbReference type="GO" id="GO:0031204">
    <property type="term" value="P:post-translational protein targeting to membrane, translocation"/>
    <property type="evidence" value="ECO:0000318"/>
    <property type="project" value="GO_Central"/>
</dbReference>
<dbReference type="GO" id="GO:0006487">
    <property type="term" value="P:protein N-linked glycosylation"/>
    <property type="evidence" value="ECO:0000318"/>
    <property type="project" value="GO_Central"/>
</dbReference>
<dbReference type="GO" id="GO:0048367">
    <property type="term" value="P:shoot system development"/>
    <property type="evidence" value="ECO:0000315"/>
    <property type="project" value="UniProtKB"/>
</dbReference>
<dbReference type="InterPro" id="IPR049625">
    <property type="entry name" value="Glyco_transf_61_cat"/>
</dbReference>
<dbReference type="InterPro" id="IPR007657">
    <property type="entry name" value="Glycosyltransferase_61"/>
</dbReference>
<dbReference type="PANTHER" id="PTHR48437">
    <property type="entry name" value="INITIATOR BINDING DOMAIN-CONTAINING PROTEIN"/>
    <property type="match status" value="1"/>
</dbReference>
<dbReference type="PANTHER" id="PTHR48437:SF1">
    <property type="entry name" value="INITIATOR BINDING DOMAIN-CONTAINING PROTEIN"/>
    <property type="match status" value="1"/>
</dbReference>
<dbReference type="Pfam" id="PF04577">
    <property type="entry name" value="Glyco_transf_61"/>
    <property type="match status" value="1"/>
</dbReference>
<gene>
    <name evidence="5" type="primary">RCN11</name>
    <name evidence="9" type="ordered locus">Os08g0503800</name>
    <name evidence="6" type="ordered locus">LOC_Os08g39380</name>
    <name evidence="8" type="ORF">OJ1506_F01.30</name>
</gene>
<keyword id="KW-0325">Glycoprotein</keyword>
<keyword id="KW-0328">Glycosyltransferase</keyword>
<keyword id="KW-0333">Golgi apparatus</keyword>
<keyword id="KW-0472">Membrane</keyword>
<keyword id="KW-1185">Reference proteome</keyword>
<keyword id="KW-0735">Signal-anchor</keyword>
<keyword id="KW-0346">Stress response</keyword>
<keyword id="KW-0808">Transferase</keyword>
<keyword id="KW-0812">Transmembrane</keyword>
<keyword id="KW-1133">Transmembrane helix</keyword>
<proteinExistence type="evidence at protein level"/>
<reference key="1">
    <citation type="journal article" date="2005" name="Nature">
        <title>The map-based sequence of the rice genome.</title>
        <authorList>
            <consortium name="International rice genome sequencing project (IRGSP)"/>
        </authorList>
    </citation>
    <scope>NUCLEOTIDE SEQUENCE [LARGE SCALE GENOMIC DNA]</scope>
    <source>
        <strain>cv. Nipponbare</strain>
    </source>
</reference>
<reference key="2">
    <citation type="journal article" date="2008" name="Nucleic Acids Res.">
        <title>The rice annotation project database (RAP-DB): 2008 update.</title>
        <authorList>
            <consortium name="The rice annotation project (RAP)"/>
        </authorList>
    </citation>
    <scope>GENOME REANNOTATION</scope>
    <source>
        <strain>cv. Nipponbare</strain>
    </source>
</reference>
<reference key="3">
    <citation type="journal article" date="2013" name="Rice">
        <title>Improvement of the Oryza sativa Nipponbare reference genome using next generation sequence and optical map data.</title>
        <authorList>
            <person name="Kawahara Y."/>
            <person name="de la Bastide M."/>
            <person name="Hamilton J.P."/>
            <person name="Kanamori H."/>
            <person name="McCombie W.R."/>
            <person name="Ouyang S."/>
            <person name="Schwartz D.C."/>
            <person name="Tanaka T."/>
            <person name="Wu J."/>
            <person name="Zhou S."/>
            <person name="Childs K.L."/>
            <person name="Davidson R.M."/>
            <person name="Lin H."/>
            <person name="Quesada-Ocampo L."/>
            <person name="Vaillancourt B."/>
            <person name="Sakai H."/>
            <person name="Lee S.S."/>
            <person name="Kim J."/>
            <person name="Numa H."/>
            <person name="Itoh T."/>
            <person name="Buell C.R."/>
            <person name="Matsumoto T."/>
        </authorList>
    </citation>
    <scope>GENOME REANNOTATION</scope>
    <source>
        <strain>cv. Nipponbare</strain>
    </source>
</reference>
<reference key="4">
    <citation type="journal article" date="2004" name="Plant Mol. Biol.">
        <title>A genetic and structural analysis of the N-glycosylation capabilities.</title>
        <authorList>
            <person name="Leonard R."/>
            <person name="Kolarich D."/>
            <person name="Paschinger K."/>
            <person name="Altmann F."/>
            <person name="Wilson I."/>
        </authorList>
    </citation>
    <scope>NUCLEOTIDE SEQUENCE [GENOMIC DNA / MRNA] OF 52-244 AND 245-533</scope>
    <source>
        <strain>cv. Nipponbare</strain>
    </source>
</reference>
<reference key="5">
    <citation type="journal article" date="2015" name="Plant Sci.">
        <title>The rice RCN11 gene encodes beta1,2-xylosyltransferase and is required for plant responses to abiotic stresses and phytohormones.</title>
        <authorList>
            <person name="Takano S."/>
            <person name="Matsuda S."/>
            <person name="Funabiki A."/>
            <person name="Furukawa J."/>
            <person name="Yamauchi T."/>
            <person name="Tokuji Y."/>
            <person name="Nakazono M."/>
            <person name="Shinohara Y."/>
            <person name="Takamure I."/>
            <person name="Kato K."/>
        </authorList>
    </citation>
    <scope>FUNCTION</scope>
    <scope>CATALYTIC ACTIVITY</scope>
    <scope>SUBCELLULAR LOCATION</scope>
    <scope>TISSUE SPECIFICITY</scope>
    <scope>INDUCTION</scope>
    <scope>DISRUPTION PHENOTYPE</scope>
</reference>
<name>RCN11_ORYSJ</name>
<comment type="function">
    <text evidence="4">Glycosyltransferase involved in the xylosylation of N-glycans (PubMed:26025522). Possesses beta-1,2-xylosyltransferase activity, transferring xylose from UDP-xylose to the core beta-linked mannose of N-glycans (PubMed:26025522). Beta-1,2-linked xylose residues on N-glycans are critical for seed germination and plant development and growth under conditions of abiotic stress (PubMed:26025522).</text>
</comment>
<comment type="pathway">
    <text evidence="6">Glycan metabolism.</text>
</comment>
<comment type="subcellular location">
    <subcellularLocation>
        <location evidence="4">Golgi apparatus membrane</location>
        <topology evidence="7">Single-pass type II membrane protein</topology>
    </subcellularLocation>
</comment>
<comment type="tissue specificity">
    <text evidence="4">Expressed at the base of the crown roots and in the basal region of the shoot, which contains the shoot and axillary meristems.</text>
</comment>
<comment type="induction">
    <text evidence="4">Induced by osmotic stress (mannitol), abscisic acid (ABA), jasmonate (JA), cytokinin (BPA) and brassinosteroid.</text>
</comment>
<comment type="disruption phenotype">
    <text evidence="4">Reduced number of tillers and reduced biomass.</text>
</comment>
<comment type="similarity">
    <text evidence="6">Belongs to the glycosyltransferase 61 family.</text>
</comment>
<protein>
    <recommendedName>
        <fullName evidence="6">Beta-1,2-xylosyltransferase RCN11</fullName>
        <shortName evidence="5">OsXylT</shortName>
        <ecNumber evidence="4">2.4.2.-</ecNumber>
    </recommendedName>
    <alternativeName>
        <fullName evidence="5">Protein REDUCED CULM NUMBER 11</fullName>
    </alternativeName>
</protein>